<sequence length="31" mass="3323">MPTITSYFGFLLAASTITPALLIGLSKIRLI</sequence>
<evidence type="ECO:0000255" key="1">
    <source>
        <dbReference type="HAMAP-Rule" id="MF_00433"/>
    </source>
</evidence>
<gene>
    <name evidence="1" type="primary">petL</name>
</gene>
<comment type="function">
    <text evidence="1">Component of the cytochrome b6-f complex, which mediates electron transfer between photosystem II (PSII) and photosystem I (PSI), cyclic electron flow around PSI, and state transitions. PetL is important for photoautotrophic growth as well as for electron transfer efficiency and stability of the cytochrome b6-f complex.</text>
</comment>
<comment type="subunit">
    <text evidence="1">The 4 large subunits of the cytochrome b6-f complex are cytochrome b6, subunit IV (17 kDa polypeptide, PetD), cytochrome f and the Rieske protein, while the 4 small subunits are PetG, PetL, PetM and PetN. The complex functions as a dimer.</text>
</comment>
<comment type="subcellular location">
    <subcellularLocation>
        <location evidence="1">Plastid</location>
        <location evidence="1">Chloroplast thylakoid membrane</location>
        <topology evidence="1">Single-pass membrane protein</topology>
    </subcellularLocation>
</comment>
<comment type="similarity">
    <text evidence="1">Belongs to the PetL family.</text>
</comment>
<geneLocation type="chloroplast"/>
<dbReference type="EMBL" id="EF380354">
    <property type="protein sequence ID" value="ABQ52537.1"/>
    <property type="molecule type" value="Genomic_DNA"/>
</dbReference>
<dbReference type="RefSeq" id="YP_001294288.1">
    <property type="nucleotide sequence ID" value="NC_009600.1"/>
</dbReference>
<dbReference type="SMR" id="A6MMW2"/>
<dbReference type="GeneID" id="5236781"/>
<dbReference type="GO" id="GO:0009535">
    <property type="term" value="C:chloroplast thylakoid membrane"/>
    <property type="evidence" value="ECO:0007669"/>
    <property type="project" value="UniProtKB-SubCell"/>
</dbReference>
<dbReference type="GO" id="GO:0009512">
    <property type="term" value="C:cytochrome b6f complex"/>
    <property type="evidence" value="ECO:0007669"/>
    <property type="project" value="InterPro"/>
</dbReference>
<dbReference type="GO" id="GO:0045158">
    <property type="term" value="F:electron transporter, transferring electrons within cytochrome b6/f complex of photosystem II activity"/>
    <property type="evidence" value="ECO:0007669"/>
    <property type="project" value="UniProtKB-UniRule"/>
</dbReference>
<dbReference type="GO" id="GO:0015979">
    <property type="term" value="P:photosynthesis"/>
    <property type="evidence" value="ECO:0007669"/>
    <property type="project" value="UniProtKB-KW"/>
</dbReference>
<dbReference type="HAMAP" id="MF_00433">
    <property type="entry name" value="Cytb6_f_PetL"/>
    <property type="match status" value="1"/>
</dbReference>
<dbReference type="InterPro" id="IPR007802">
    <property type="entry name" value="Cyt_b6/f_cplx_su6"/>
</dbReference>
<dbReference type="PANTHER" id="PTHR37266">
    <property type="entry name" value="CYTOCHROME B6-F COMPLEX SUBUNIT 6"/>
    <property type="match status" value="1"/>
</dbReference>
<dbReference type="PANTHER" id="PTHR37266:SF1">
    <property type="entry name" value="CYTOCHROME B6-F COMPLEX SUBUNIT 6"/>
    <property type="match status" value="1"/>
</dbReference>
<dbReference type="Pfam" id="PF05115">
    <property type="entry name" value="PetL"/>
    <property type="match status" value="1"/>
</dbReference>
<name>PETL_ILLOL</name>
<feature type="chain" id="PRO_0000300146" description="Cytochrome b6-f complex subunit 6">
    <location>
        <begin position="1"/>
        <end position="31"/>
    </location>
</feature>
<feature type="transmembrane region" description="Helical" evidence="1">
    <location>
        <begin position="4"/>
        <end position="26"/>
    </location>
</feature>
<organism>
    <name type="scientific">Illicium oligandrum</name>
    <name type="common">Star anise</name>
    <dbReference type="NCBI Taxonomy" id="145286"/>
    <lineage>
        <taxon>Eukaryota</taxon>
        <taxon>Viridiplantae</taxon>
        <taxon>Streptophyta</taxon>
        <taxon>Embryophyta</taxon>
        <taxon>Tracheophyta</taxon>
        <taxon>Spermatophyta</taxon>
        <taxon>Magnoliopsida</taxon>
        <taxon>Austrobaileyales</taxon>
        <taxon>Schisandraceae</taxon>
        <taxon>Illicium</taxon>
    </lineage>
</organism>
<keyword id="KW-0150">Chloroplast</keyword>
<keyword id="KW-0249">Electron transport</keyword>
<keyword id="KW-0472">Membrane</keyword>
<keyword id="KW-0602">Photosynthesis</keyword>
<keyword id="KW-0934">Plastid</keyword>
<keyword id="KW-0793">Thylakoid</keyword>
<keyword id="KW-0812">Transmembrane</keyword>
<keyword id="KW-1133">Transmembrane helix</keyword>
<keyword id="KW-0813">Transport</keyword>
<proteinExistence type="inferred from homology"/>
<accession>A6MMW2</accession>
<reference key="1">
    <citation type="journal article" date="2007" name="Mol. Phylogenet. Evol.">
        <title>Phylogenetic and evolutionary implications of complete chloroplast genome sequences of four early-diverging angiosperms: Buxus (Buxaceae), Chloranthus (Chloranthaceae), Dioscorea (Dioscoreaceae), and Illicium (Schisandraceae).</title>
        <authorList>
            <person name="Hansen D.R."/>
            <person name="Dastidar S.G."/>
            <person name="Cai Z."/>
            <person name="Penaflor C."/>
            <person name="Kuehl J.V."/>
            <person name="Boore J.L."/>
            <person name="Jansen R.K."/>
        </authorList>
    </citation>
    <scope>NUCLEOTIDE SEQUENCE [LARGE SCALE GENOMIC DNA]</scope>
</reference>
<protein>
    <recommendedName>
        <fullName evidence="1">Cytochrome b6-f complex subunit 6</fullName>
    </recommendedName>
    <alternativeName>
        <fullName evidence="1">Cytochrome b6-f complex subunit PetL</fullName>
    </alternativeName>
    <alternativeName>
        <fullName evidence="1">Cytochrome b6-f complex subunit VI</fullName>
    </alternativeName>
</protein>